<proteinExistence type="inferred from homology"/>
<protein>
    <recommendedName>
        <fullName evidence="1">Peptide methionine sulfoxide reductase MsrB</fullName>
        <ecNumber evidence="1">1.8.4.12</ecNumber>
    </recommendedName>
    <alternativeName>
        <fullName evidence="1">Peptide-methionine (R)-S-oxide reductase</fullName>
    </alternativeName>
</protein>
<gene>
    <name evidence="1" type="primary">msrB</name>
    <name type="ordered locus">ACIAD2086</name>
</gene>
<keyword id="KW-0479">Metal-binding</keyword>
<keyword id="KW-0560">Oxidoreductase</keyword>
<keyword id="KW-0862">Zinc</keyword>
<feature type="chain" id="PRO_1000068261" description="Peptide methionine sulfoxide reductase MsrB">
    <location>
        <begin position="1"/>
        <end position="139"/>
    </location>
</feature>
<feature type="domain" description="MsrB" evidence="2">
    <location>
        <begin position="8"/>
        <end position="130"/>
    </location>
</feature>
<feature type="active site" description="Nucleophile" evidence="2">
    <location>
        <position position="119"/>
    </location>
</feature>
<feature type="binding site" evidence="2">
    <location>
        <position position="47"/>
    </location>
    <ligand>
        <name>Zn(2+)</name>
        <dbReference type="ChEBI" id="CHEBI:29105"/>
    </ligand>
</feature>
<feature type="binding site" evidence="2">
    <location>
        <position position="50"/>
    </location>
    <ligand>
        <name>Zn(2+)</name>
        <dbReference type="ChEBI" id="CHEBI:29105"/>
    </ligand>
</feature>
<feature type="binding site" evidence="2">
    <location>
        <position position="96"/>
    </location>
    <ligand>
        <name>Zn(2+)</name>
        <dbReference type="ChEBI" id="CHEBI:29105"/>
    </ligand>
</feature>
<feature type="binding site" evidence="2">
    <location>
        <position position="99"/>
    </location>
    <ligand>
        <name>Zn(2+)</name>
        <dbReference type="ChEBI" id="CHEBI:29105"/>
    </ligand>
</feature>
<reference key="1">
    <citation type="journal article" date="2004" name="Nucleic Acids Res.">
        <title>Unique features revealed by the genome sequence of Acinetobacter sp. ADP1, a versatile and naturally transformation competent bacterium.</title>
        <authorList>
            <person name="Barbe V."/>
            <person name="Vallenet D."/>
            <person name="Fonknechten N."/>
            <person name="Kreimeyer A."/>
            <person name="Oztas S."/>
            <person name="Labarre L."/>
            <person name="Cruveiller S."/>
            <person name="Robert C."/>
            <person name="Duprat S."/>
            <person name="Wincker P."/>
            <person name="Ornston L.N."/>
            <person name="Weissenbach J."/>
            <person name="Marliere P."/>
            <person name="Cohen G.N."/>
            <person name="Medigue C."/>
        </authorList>
    </citation>
    <scope>NUCLEOTIDE SEQUENCE [LARGE SCALE GENOMIC DNA]</scope>
    <source>
        <strain>ATCC 33305 / BD413 / ADP1</strain>
    </source>
</reference>
<accession>Q6FAL8</accession>
<name>MSRB_ACIAD</name>
<evidence type="ECO:0000255" key="1">
    <source>
        <dbReference type="HAMAP-Rule" id="MF_01400"/>
    </source>
</evidence>
<evidence type="ECO:0000255" key="2">
    <source>
        <dbReference type="PROSITE-ProRule" id="PRU01126"/>
    </source>
</evidence>
<comment type="catalytic activity">
    <reaction evidence="1">
        <text>L-methionyl-[protein] + [thioredoxin]-disulfide + H2O = L-methionyl-(R)-S-oxide-[protein] + [thioredoxin]-dithiol</text>
        <dbReference type="Rhea" id="RHEA:24164"/>
        <dbReference type="Rhea" id="RHEA-COMP:10698"/>
        <dbReference type="Rhea" id="RHEA-COMP:10700"/>
        <dbReference type="Rhea" id="RHEA-COMP:12313"/>
        <dbReference type="Rhea" id="RHEA-COMP:12314"/>
        <dbReference type="ChEBI" id="CHEBI:15377"/>
        <dbReference type="ChEBI" id="CHEBI:16044"/>
        <dbReference type="ChEBI" id="CHEBI:29950"/>
        <dbReference type="ChEBI" id="CHEBI:45764"/>
        <dbReference type="ChEBI" id="CHEBI:50058"/>
        <dbReference type="EC" id="1.8.4.12"/>
    </reaction>
</comment>
<comment type="cofactor">
    <cofactor evidence="1">
        <name>Zn(2+)</name>
        <dbReference type="ChEBI" id="CHEBI:29105"/>
    </cofactor>
    <text evidence="1">Binds 1 zinc ion per subunit. The zinc ion is important for the structural integrity of the protein.</text>
</comment>
<comment type="similarity">
    <text evidence="1">Belongs to the MsrB Met sulfoxide reductase family.</text>
</comment>
<dbReference type="EC" id="1.8.4.12" evidence="1"/>
<dbReference type="EMBL" id="CR543861">
    <property type="protein sequence ID" value="CAG68895.1"/>
    <property type="molecule type" value="Genomic_DNA"/>
</dbReference>
<dbReference type="RefSeq" id="WP_004927532.1">
    <property type="nucleotide sequence ID" value="NC_005966.1"/>
</dbReference>
<dbReference type="SMR" id="Q6FAL8"/>
<dbReference type="STRING" id="202950.GCA_001485005_00295"/>
<dbReference type="GeneID" id="45234432"/>
<dbReference type="KEGG" id="aci:ACIAD2086"/>
<dbReference type="eggNOG" id="COG0229">
    <property type="taxonomic scope" value="Bacteria"/>
</dbReference>
<dbReference type="HOGENOM" id="CLU_031040_8_5_6"/>
<dbReference type="OrthoDB" id="9785497at2"/>
<dbReference type="BioCyc" id="ASP62977:ACIAD_RS09570-MONOMER"/>
<dbReference type="Proteomes" id="UP000000430">
    <property type="component" value="Chromosome"/>
</dbReference>
<dbReference type="GO" id="GO:0005737">
    <property type="term" value="C:cytoplasm"/>
    <property type="evidence" value="ECO:0007669"/>
    <property type="project" value="TreeGrafter"/>
</dbReference>
<dbReference type="GO" id="GO:0033743">
    <property type="term" value="F:peptide-methionine (R)-S-oxide reductase activity"/>
    <property type="evidence" value="ECO:0007669"/>
    <property type="project" value="UniProtKB-UniRule"/>
</dbReference>
<dbReference type="GO" id="GO:0008270">
    <property type="term" value="F:zinc ion binding"/>
    <property type="evidence" value="ECO:0007669"/>
    <property type="project" value="UniProtKB-UniRule"/>
</dbReference>
<dbReference type="GO" id="GO:0030091">
    <property type="term" value="P:protein repair"/>
    <property type="evidence" value="ECO:0007669"/>
    <property type="project" value="InterPro"/>
</dbReference>
<dbReference type="GO" id="GO:0006979">
    <property type="term" value="P:response to oxidative stress"/>
    <property type="evidence" value="ECO:0007669"/>
    <property type="project" value="InterPro"/>
</dbReference>
<dbReference type="FunFam" id="2.170.150.20:FF:000001">
    <property type="entry name" value="Peptide methionine sulfoxide reductase MsrB"/>
    <property type="match status" value="1"/>
</dbReference>
<dbReference type="Gene3D" id="2.170.150.20">
    <property type="entry name" value="Peptide methionine sulfoxide reductase"/>
    <property type="match status" value="1"/>
</dbReference>
<dbReference type="HAMAP" id="MF_01400">
    <property type="entry name" value="MsrB"/>
    <property type="match status" value="1"/>
</dbReference>
<dbReference type="InterPro" id="IPR028427">
    <property type="entry name" value="Met_Sox_Rdtase_MsrB"/>
</dbReference>
<dbReference type="InterPro" id="IPR002579">
    <property type="entry name" value="Met_Sox_Rdtase_MsrB_dom"/>
</dbReference>
<dbReference type="InterPro" id="IPR011057">
    <property type="entry name" value="Mss4-like_sf"/>
</dbReference>
<dbReference type="NCBIfam" id="TIGR00357">
    <property type="entry name" value="peptide-methionine (R)-S-oxide reductase MsrB"/>
    <property type="match status" value="1"/>
</dbReference>
<dbReference type="PANTHER" id="PTHR10173">
    <property type="entry name" value="METHIONINE SULFOXIDE REDUCTASE"/>
    <property type="match status" value="1"/>
</dbReference>
<dbReference type="PANTHER" id="PTHR10173:SF52">
    <property type="entry name" value="METHIONINE-R-SULFOXIDE REDUCTASE B1"/>
    <property type="match status" value="1"/>
</dbReference>
<dbReference type="Pfam" id="PF01641">
    <property type="entry name" value="SelR"/>
    <property type="match status" value="1"/>
</dbReference>
<dbReference type="SUPFAM" id="SSF51316">
    <property type="entry name" value="Mss4-like"/>
    <property type="match status" value="1"/>
</dbReference>
<dbReference type="PROSITE" id="PS51790">
    <property type="entry name" value="MSRB"/>
    <property type="match status" value="1"/>
</dbReference>
<sequence>MGKLNKTEREWQRELSPEEYRITRQKGTEPAFTGQYWNTKQSGTYVCRCCGTELFSSISKYDSGCGWPSFYKPINTTAIEEHDDFSHGMVRTEIVCHHCDAHLGHVFEDGPQPTGLRYCVNSASLQLKTDEKNDEETYP</sequence>
<organism>
    <name type="scientific">Acinetobacter baylyi (strain ATCC 33305 / BD413 / ADP1)</name>
    <dbReference type="NCBI Taxonomy" id="62977"/>
    <lineage>
        <taxon>Bacteria</taxon>
        <taxon>Pseudomonadati</taxon>
        <taxon>Pseudomonadota</taxon>
        <taxon>Gammaproteobacteria</taxon>
        <taxon>Moraxellales</taxon>
        <taxon>Moraxellaceae</taxon>
        <taxon>Acinetobacter</taxon>
    </lineage>
</organism>